<feature type="chain" id="PRO_0000296412" description="Large ribosomal subunit protein bL32">
    <location>
        <begin position="1"/>
        <end position="61"/>
    </location>
</feature>
<feature type="region of interest" description="Disordered" evidence="2">
    <location>
        <begin position="1"/>
        <end position="44"/>
    </location>
</feature>
<feature type="compositionally biased region" description="Basic residues" evidence="2">
    <location>
        <begin position="7"/>
        <end position="16"/>
    </location>
</feature>
<feature type="compositionally biased region" description="Polar residues" evidence="2">
    <location>
        <begin position="25"/>
        <end position="34"/>
    </location>
</feature>
<gene>
    <name evidence="1" type="primary">rpmF</name>
    <name type="ordered locus">A1S_0816</name>
</gene>
<evidence type="ECO:0000255" key="1">
    <source>
        <dbReference type="HAMAP-Rule" id="MF_00340"/>
    </source>
</evidence>
<evidence type="ECO:0000256" key="2">
    <source>
        <dbReference type="SAM" id="MobiDB-lite"/>
    </source>
</evidence>
<evidence type="ECO:0000305" key="3"/>
<comment type="similarity">
    <text evidence="1">Belongs to the bacterial ribosomal protein bL32 family.</text>
</comment>
<keyword id="KW-0687">Ribonucleoprotein</keyword>
<keyword id="KW-0689">Ribosomal protein</keyword>
<name>RL32_ACIBT</name>
<organism>
    <name type="scientific">Acinetobacter baumannii (strain ATCC 17978 / DSM 105126 / CIP 53.77 / LMG 1025 / NCDC KC755 / 5377)</name>
    <dbReference type="NCBI Taxonomy" id="400667"/>
    <lineage>
        <taxon>Bacteria</taxon>
        <taxon>Pseudomonadati</taxon>
        <taxon>Pseudomonadota</taxon>
        <taxon>Gammaproteobacteria</taxon>
        <taxon>Moraxellales</taxon>
        <taxon>Moraxellaceae</taxon>
        <taxon>Acinetobacter</taxon>
        <taxon>Acinetobacter calcoaceticus/baumannii complex</taxon>
    </lineage>
</organism>
<accession>A3M2W0</accession>
<protein>
    <recommendedName>
        <fullName evidence="1">Large ribosomal subunit protein bL32</fullName>
    </recommendedName>
    <alternativeName>
        <fullName evidence="3">50S ribosomal protein L32</fullName>
    </alternativeName>
</protein>
<dbReference type="EMBL" id="CP000521">
    <property type="protein sequence ID" value="ABO11254.1"/>
    <property type="molecule type" value="Genomic_DNA"/>
</dbReference>
<dbReference type="RefSeq" id="WP_000290730.1">
    <property type="nucleotide sequence ID" value="NZ_CP053098.1"/>
</dbReference>
<dbReference type="SMR" id="A3M2W0"/>
<dbReference type="GeneID" id="9383546"/>
<dbReference type="KEGG" id="acb:A1S_0816"/>
<dbReference type="HOGENOM" id="CLU_129084_2_1_6"/>
<dbReference type="GO" id="GO:0015934">
    <property type="term" value="C:large ribosomal subunit"/>
    <property type="evidence" value="ECO:0007669"/>
    <property type="project" value="InterPro"/>
</dbReference>
<dbReference type="GO" id="GO:0003735">
    <property type="term" value="F:structural constituent of ribosome"/>
    <property type="evidence" value="ECO:0007669"/>
    <property type="project" value="InterPro"/>
</dbReference>
<dbReference type="GO" id="GO:0006412">
    <property type="term" value="P:translation"/>
    <property type="evidence" value="ECO:0007669"/>
    <property type="project" value="UniProtKB-UniRule"/>
</dbReference>
<dbReference type="HAMAP" id="MF_00340">
    <property type="entry name" value="Ribosomal_bL32"/>
    <property type="match status" value="1"/>
</dbReference>
<dbReference type="InterPro" id="IPR002677">
    <property type="entry name" value="Ribosomal_bL32"/>
</dbReference>
<dbReference type="InterPro" id="IPR044957">
    <property type="entry name" value="Ribosomal_bL32_bact"/>
</dbReference>
<dbReference type="InterPro" id="IPR011332">
    <property type="entry name" value="Ribosomal_zn-bd"/>
</dbReference>
<dbReference type="NCBIfam" id="TIGR01031">
    <property type="entry name" value="rpmF_bact"/>
    <property type="match status" value="1"/>
</dbReference>
<dbReference type="PANTHER" id="PTHR35534">
    <property type="entry name" value="50S RIBOSOMAL PROTEIN L32"/>
    <property type="match status" value="1"/>
</dbReference>
<dbReference type="PANTHER" id="PTHR35534:SF1">
    <property type="entry name" value="LARGE RIBOSOMAL SUBUNIT PROTEIN BL32"/>
    <property type="match status" value="1"/>
</dbReference>
<dbReference type="Pfam" id="PF01783">
    <property type="entry name" value="Ribosomal_L32p"/>
    <property type="match status" value="1"/>
</dbReference>
<dbReference type="SUPFAM" id="SSF57829">
    <property type="entry name" value="Zn-binding ribosomal proteins"/>
    <property type="match status" value="1"/>
</dbReference>
<proteinExistence type="inferred from homology"/>
<sequence>MAVQQNRKSRSRRDMRRSHDALTENALTVDQATGETHRRHHVTKDGFYRGRQLFAKAADAE</sequence>
<reference key="1">
    <citation type="journal article" date="2007" name="Genes Dev.">
        <title>New insights into Acinetobacter baumannii pathogenesis revealed by high-density pyrosequencing and transposon mutagenesis.</title>
        <authorList>
            <person name="Smith M.G."/>
            <person name="Gianoulis T.A."/>
            <person name="Pukatzki S."/>
            <person name="Mekalanos J.J."/>
            <person name="Ornston L.N."/>
            <person name="Gerstein M."/>
            <person name="Snyder M."/>
        </authorList>
    </citation>
    <scope>NUCLEOTIDE SEQUENCE [LARGE SCALE GENOMIC DNA]</scope>
    <source>
        <strain>ATCC 17978 / DSM 105126 / CIP 53.77 / LMG 1025 / NCDC KC755 / 5377</strain>
    </source>
</reference>